<name>KTHY_CHLTR</name>
<dbReference type="EC" id="2.7.4.9"/>
<dbReference type="EMBL" id="AE001273">
    <property type="protein sequence ID" value="AAC67780.1"/>
    <property type="molecule type" value="Genomic_DNA"/>
</dbReference>
<dbReference type="PIR" id="E71546">
    <property type="entry name" value="E71546"/>
</dbReference>
<dbReference type="RefSeq" id="WP_010725115.1">
    <property type="nucleotide sequence ID" value="NC_000117.1"/>
</dbReference>
<dbReference type="SMR" id="O84191"/>
<dbReference type="FunCoup" id="O84191">
    <property type="interactions" value="187"/>
</dbReference>
<dbReference type="STRING" id="272561.CT_188"/>
<dbReference type="EnsemblBacteria" id="AAC67780">
    <property type="protein sequence ID" value="AAC67780"/>
    <property type="gene ID" value="CT_188"/>
</dbReference>
<dbReference type="KEGG" id="ctr:CT_188"/>
<dbReference type="PATRIC" id="fig|272561.5.peg.202"/>
<dbReference type="HOGENOM" id="CLU_049131_0_2_0"/>
<dbReference type="InParanoid" id="O84191"/>
<dbReference type="OrthoDB" id="9774907at2"/>
<dbReference type="Proteomes" id="UP000000431">
    <property type="component" value="Chromosome"/>
</dbReference>
<dbReference type="GO" id="GO:0005737">
    <property type="term" value="C:cytoplasm"/>
    <property type="evidence" value="ECO:0000318"/>
    <property type="project" value="GO_Central"/>
</dbReference>
<dbReference type="GO" id="GO:0005829">
    <property type="term" value="C:cytosol"/>
    <property type="evidence" value="ECO:0000318"/>
    <property type="project" value="GO_Central"/>
</dbReference>
<dbReference type="GO" id="GO:0005524">
    <property type="term" value="F:ATP binding"/>
    <property type="evidence" value="ECO:0007669"/>
    <property type="project" value="UniProtKB-UniRule"/>
</dbReference>
<dbReference type="GO" id="GO:0004798">
    <property type="term" value="F:dTMP kinase activity"/>
    <property type="evidence" value="ECO:0000318"/>
    <property type="project" value="GO_Central"/>
</dbReference>
<dbReference type="GO" id="GO:0006233">
    <property type="term" value="P:dTDP biosynthetic process"/>
    <property type="evidence" value="ECO:0000318"/>
    <property type="project" value="GO_Central"/>
</dbReference>
<dbReference type="GO" id="GO:0006235">
    <property type="term" value="P:dTTP biosynthetic process"/>
    <property type="evidence" value="ECO:0000318"/>
    <property type="project" value="GO_Central"/>
</dbReference>
<dbReference type="GO" id="GO:0006227">
    <property type="term" value="P:dUDP biosynthetic process"/>
    <property type="evidence" value="ECO:0000318"/>
    <property type="project" value="GO_Central"/>
</dbReference>
<dbReference type="CDD" id="cd01672">
    <property type="entry name" value="TMPK"/>
    <property type="match status" value="1"/>
</dbReference>
<dbReference type="FunFam" id="3.40.50.300:FF:000225">
    <property type="entry name" value="Thymidylate kinase"/>
    <property type="match status" value="1"/>
</dbReference>
<dbReference type="Gene3D" id="3.40.50.300">
    <property type="entry name" value="P-loop containing nucleotide triphosphate hydrolases"/>
    <property type="match status" value="1"/>
</dbReference>
<dbReference type="HAMAP" id="MF_00165">
    <property type="entry name" value="Thymidylate_kinase"/>
    <property type="match status" value="1"/>
</dbReference>
<dbReference type="InterPro" id="IPR027417">
    <property type="entry name" value="P-loop_NTPase"/>
</dbReference>
<dbReference type="InterPro" id="IPR039430">
    <property type="entry name" value="Thymidylate_kin-like_dom"/>
</dbReference>
<dbReference type="InterPro" id="IPR018095">
    <property type="entry name" value="Thymidylate_kin_CS"/>
</dbReference>
<dbReference type="InterPro" id="IPR018094">
    <property type="entry name" value="Thymidylate_kinase"/>
</dbReference>
<dbReference type="NCBIfam" id="TIGR00041">
    <property type="entry name" value="DTMP_kinase"/>
    <property type="match status" value="1"/>
</dbReference>
<dbReference type="PANTHER" id="PTHR10344">
    <property type="entry name" value="THYMIDYLATE KINASE"/>
    <property type="match status" value="1"/>
</dbReference>
<dbReference type="PANTHER" id="PTHR10344:SF4">
    <property type="entry name" value="UMP-CMP KINASE 2, MITOCHONDRIAL"/>
    <property type="match status" value="1"/>
</dbReference>
<dbReference type="Pfam" id="PF02223">
    <property type="entry name" value="Thymidylate_kin"/>
    <property type="match status" value="1"/>
</dbReference>
<dbReference type="SUPFAM" id="SSF52540">
    <property type="entry name" value="P-loop containing nucleoside triphosphate hydrolases"/>
    <property type="match status" value="1"/>
</dbReference>
<dbReference type="PROSITE" id="PS01331">
    <property type="entry name" value="THYMIDYLATE_KINASE"/>
    <property type="match status" value="1"/>
</dbReference>
<feature type="chain" id="PRO_0000155263" description="Thymidylate kinase">
    <location>
        <begin position="1"/>
        <end position="203"/>
    </location>
</feature>
<feature type="binding site" evidence="2">
    <location>
        <begin position="7"/>
        <end position="14"/>
    </location>
    <ligand>
        <name>ATP</name>
        <dbReference type="ChEBI" id="CHEBI:30616"/>
    </ligand>
</feature>
<proteinExistence type="inferred from homology"/>
<keyword id="KW-0067">ATP-binding</keyword>
<keyword id="KW-0418">Kinase</keyword>
<keyword id="KW-0545">Nucleotide biosynthesis</keyword>
<keyword id="KW-0547">Nucleotide-binding</keyword>
<keyword id="KW-1185">Reference proteome</keyword>
<keyword id="KW-0808">Transferase</keyword>
<evidence type="ECO:0000250" key="1"/>
<evidence type="ECO:0000255" key="2"/>
<evidence type="ECO:0000305" key="3"/>
<gene>
    <name type="primary">tmk</name>
    <name type="ordered locus">CT_188</name>
</gene>
<accession>O84191</accession>
<organism>
    <name type="scientific">Chlamydia trachomatis serovar D (strain ATCC VR-885 / DSM 19411 / UW-3/Cx)</name>
    <dbReference type="NCBI Taxonomy" id="272561"/>
    <lineage>
        <taxon>Bacteria</taxon>
        <taxon>Pseudomonadati</taxon>
        <taxon>Chlamydiota</taxon>
        <taxon>Chlamydiia</taxon>
        <taxon>Chlamydiales</taxon>
        <taxon>Chlamydiaceae</taxon>
        <taxon>Chlamydia/Chlamydophila group</taxon>
        <taxon>Chlamydia</taxon>
    </lineage>
</organism>
<protein>
    <recommendedName>
        <fullName>Thymidylate kinase</fullName>
        <ecNumber>2.7.4.9</ecNumber>
    </recommendedName>
    <alternativeName>
        <fullName>dTMP kinase</fullName>
    </alternativeName>
</protein>
<reference key="1">
    <citation type="journal article" date="1998" name="Science">
        <title>Genome sequence of an obligate intracellular pathogen of humans: Chlamydia trachomatis.</title>
        <authorList>
            <person name="Stephens R.S."/>
            <person name="Kalman S."/>
            <person name="Lammel C.J."/>
            <person name="Fan J."/>
            <person name="Marathe R."/>
            <person name="Aravind L."/>
            <person name="Mitchell W.P."/>
            <person name="Olinger L."/>
            <person name="Tatusov R.L."/>
            <person name="Zhao Q."/>
            <person name="Koonin E.V."/>
            <person name="Davis R.W."/>
        </authorList>
    </citation>
    <scope>NUCLEOTIDE SEQUENCE [LARGE SCALE GENOMIC DNA]</scope>
    <source>
        <strain>ATCC VR-885 / DSM 19411 / UW-3/Cx</strain>
    </source>
</reference>
<sequence>MFIVVEGGEGAGKTQFIQALSKRLIEEGREIVTTREPGGCSLGDSVRGLLLDPEQKISPYAELLLFLAARAQHIQEKIIPALKSGKTVISDRFHDSTIVYQGIAGGLGESFVTNLCYHVVGDKPFLPDITFLLDIPAREGLLRKARQKHLDKFEQKPQIFHRSVREGFLALAEKAPDRYKVLDALLPTEASVDQALLQIRALI</sequence>
<comment type="function">
    <text evidence="1">Phosphorylation of dTMP to form dTDP in both de novo and salvage pathways of dTTP synthesis.</text>
</comment>
<comment type="catalytic activity">
    <reaction>
        <text>dTMP + ATP = dTDP + ADP</text>
        <dbReference type="Rhea" id="RHEA:13517"/>
        <dbReference type="ChEBI" id="CHEBI:30616"/>
        <dbReference type="ChEBI" id="CHEBI:58369"/>
        <dbReference type="ChEBI" id="CHEBI:63528"/>
        <dbReference type="ChEBI" id="CHEBI:456216"/>
        <dbReference type="EC" id="2.7.4.9"/>
    </reaction>
</comment>
<comment type="similarity">
    <text evidence="3">Belongs to the thymidylate kinase family.</text>
</comment>